<protein>
    <recommendedName>
        <fullName>DNA-binding protein H-NS</fullName>
    </recommendedName>
    <alternativeName>
        <fullName>Histone-like protein HLP-II</fullName>
    </alternativeName>
    <alternativeName>
        <fullName>Protein B1</fullName>
    </alternativeName>
    <alternativeName>
        <fullName>Protein H1</fullName>
    </alternativeName>
</protein>
<proteinExistence type="inferred from homology"/>
<dbReference type="EMBL" id="CP000026">
    <property type="protein sequence ID" value="AAV77088.1"/>
    <property type="molecule type" value="Genomic_DNA"/>
</dbReference>
<dbReference type="RefSeq" id="WP_001287382.1">
    <property type="nucleotide sequence ID" value="NC_006511.1"/>
</dbReference>
<dbReference type="BMRB" id="Q5PCT5"/>
<dbReference type="SMR" id="Q5PCT5"/>
<dbReference type="KEGG" id="spt:SPA1127"/>
<dbReference type="HOGENOM" id="CLU_117503_0_0_6"/>
<dbReference type="Proteomes" id="UP000008185">
    <property type="component" value="Chromosome"/>
</dbReference>
<dbReference type="GO" id="GO:0005829">
    <property type="term" value="C:cytosol"/>
    <property type="evidence" value="ECO:0007669"/>
    <property type="project" value="TreeGrafter"/>
</dbReference>
<dbReference type="GO" id="GO:0009295">
    <property type="term" value="C:nucleoid"/>
    <property type="evidence" value="ECO:0007669"/>
    <property type="project" value="UniProtKB-SubCell"/>
</dbReference>
<dbReference type="GO" id="GO:0032993">
    <property type="term" value="C:protein-DNA complex"/>
    <property type="evidence" value="ECO:0007669"/>
    <property type="project" value="TreeGrafter"/>
</dbReference>
<dbReference type="GO" id="GO:0003681">
    <property type="term" value="F:bent DNA binding"/>
    <property type="evidence" value="ECO:0007669"/>
    <property type="project" value="TreeGrafter"/>
</dbReference>
<dbReference type="GO" id="GO:0001217">
    <property type="term" value="F:DNA-binding transcription repressor activity"/>
    <property type="evidence" value="ECO:0007669"/>
    <property type="project" value="TreeGrafter"/>
</dbReference>
<dbReference type="GO" id="GO:0003680">
    <property type="term" value="F:minor groove of adenine-thymine-rich DNA binding"/>
    <property type="evidence" value="ECO:0007669"/>
    <property type="project" value="TreeGrafter"/>
</dbReference>
<dbReference type="GO" id="GO:0046983">
    <property type="term" value="F:protein dimerization activity"/>
    <property type="evidence" value="ECO:0007669"/>
    <property type="project" value="InterPro"/>
</dbReference>
<dbReference type="GO" id="GO:0030527">
    <property type="term" value="F:structural constituent of chromatin"/>
    <property type="evidence" value="ECO:0007669"/>
    <property type="project" value="InterPro"/>
</dbReference>
<dbReference type="GO" id="GO:0000976">
    <property type="term" value="F:transcription cis-regulatory region binding"/>
    <property type="evidence" value="ECO:0007669"/>
    <property type="project" value="TreeGrafter"/>
</dbReference>
<dbReference type="FunFam" id="1.10.287.1050:FF:000001">
    <property type="entry name" value="DNA-binding protein"/>
    <property type="match status" value="1"/>
</dbReference>
<dbReference type="FunFam" id="4.10.430.10:FF:000001">
    <property type="entry name" value="DNA-binding protein"/>
    <property type="match status" value="1"/>
</dbReference>
<dbReference type="Gene3D" id="1.10.287.1050">
    <property type="entry name" value="H-NS histone-like proteins"/>
    <property type="match status" value="1"/>
</dbReference>
<dbReference type="Gene3D" id="4.10.430.10">
    <property type="entry name" value="Histone-like protein H-NS, C-terminal domain"/>
    <property type="match status" value="1"/>
</dbReference>
<dbReference type="InterPro" id="IPR054180">
    <property type="entry name" value="H-NS-like_N"/>
</dbReference>
<dbReference type="InterPro" id="IPR027444">
    <property type="entry name" value="H-NS_C_dom"/>
</dbReference>
<dbReference type="InterPro" id="IPR037150">
    <property type="entry name" value="H-NS_C_dom_sf"/>
</dbReference>
<dbReference type="InterPro" id="IPR001801">
    <property type="entry name" value="Histone_HNS"/>
</dbReference>
<dbReference type="InterPro" id="IPR027454">
    <property type="entry name" value="Histone_HNS_N"/>
</dbReference>
<dbReference type="NCBIfam" id="NF008193">
    <property type="entry name" value="PRK10947.1"/>
    <property type="match status" value="1"/>
</dbReference>
<dbReference type="PANTHER" id="PTHR38097">
    <property type="match status" value="1"/>
</dbReference>
<dbReference type="PANTHER" id="PTHR38097:SF1">
    <property type="entry name" value="DNA-BINDING PROTEIN H-NS"/>
    <property type="match status" value="1"/>
</dbReference>
<dbReference type="Pfam" id="PF00816">
    <property type="entry name" value="Histone_HNS"/>
    <property type="match status" value="1"/>
</dbReference>
<dbReference type="Pfam" id="PF22470">
    <property type="entry name" value="Histone_HNS_N"/>
    <property type="match status" value="1"/>
</dbReference>
<dbReference type="PIRSF" id="PIRSF002096">
    <property type="entry name" value="HnS"/>
    <property type="match status" value="1"/>
</dbReference>
<dbReference type="SMART" id="SM00528">
    <property type="entry name" value="HNS"/>
    <property type="match status" value="1"/>
</dbReference>
<dbReference type="SUPFAM" id="SSF81273">
    <property type="entry name" value="H-NS histone-like proteins"/>
    <property type="match status" value="2"/>
</dbReference>
<accession>Q5PCT5</accession>
<organism>
    <name type="scientific">Salmonella paratyphi A (strain ATCC 9150 / SARB42)</name>
    <dbReference type="NCBI Taxonomy" id="295319"/>
    <lineage>
        <taxon>Bacteria</taxon>
        <taxon>Pseudomonadati</taxon>
        <taxon>Pseudomonadota</taxon>
        <taxon>Gammaproteobacteria</taxon>
        <taxon>Enterobacterales</taxon>
        <taxon>Enterobacteriaceae</taxon>
        <taxon>Salmonella</taxon>
    </lineage>
</organism>
<evidence type="ECO:0000250" key="1"/>
<evidence type="ECO:0000250" key="2">
    <source>
        <dbReference type="UniProtKB" id="P0A1S2"/>
    </source>
</evidence>
<evidence type="ECO:0000250" key="3">
    <source>
        <dbReference type="UniProtKB" id="P0ACF8"/>
    </source>
</evidence>
<evidence type="ECO:0000305" key="4"/>
<gene>
    <name type="primary">hns</name>
    <name type="synonym">hnsA</name>
    <name type="synonym">osmZ</name>
    <name type="ordered locus">SPA1127</name>
</gene>
<reference key="1">
    <citation type="journal article" date="2004" name="Nat. Genet.">
        <title>Comparison of genome degradation in Paratyphi A and Typhi, human-restricted serovars of Salmonella enterica that cause typhoid.</title>
        <authorList>
            <person name="McClelland M."/>
            <person name="Sanderson K.E."/>
            <person name="Clifton S.W."/>
            <person name="Latreille P."/>
            <person name="Porwollik S."/>
            <person name="Sabo A."/>
            <person name="Meyer R."/>
            <person name="Bieri T."/>
            <person name="Ozersky P."/>
            <person name="McLellan M."/>
            <person name="Harkins C.R."/>
            <person name="Wang C."/>
            <person name="Nguyen C."/>
            <person name="Berghoff A."/>
            <person name="Elliott G."/>
            <person name="Kohlberg S."/>
            <person name="Strong C."/>
            <person name="Du F."/>
            <person name="Carter J."/>
            <person name="Kremizki C."/>
            <person name="Layman D."/>
            <person name="Leonard S."/>
            <person name="Sun H."/>
            <person name="Fulton L."/>
            <person name="Nash W."/>
            <person name="Miner T."/>
            <person name="Minx P."/>
            <person name="Delehaunty K."/>
            <person name="Fronick C."/>
            <person name="Magrini V."/>
            <person name="Nhan M."/>
            <person name="Warren W."/>
            <person name="Florea L."/>
            <person name="Spieth J."/>
            <person name="Wilson R.K."/>
        </authorList>
    </citation>
    <scope>NUCLEOTIDE SEQUENCE [LARGE SCALE GENOMIC DNA]</scope>
    <source>
        <strain>ATCC 9150 / SARB42</strain>
    </source>
</reference>
<keyword id="KW-0963">Cytoplasm</keyword>
<keyword id="KW-0238">DNA-binding</keyword>
<keyword id="KW-0678">Repressor</keyword>
<keyword id="KW-0804">Transcription</keyword>
<keyword id="KW-0805">Transcription regulation</keyword>
<sequence>MSEALKILNNIRTLRAQARECTLETLEEMLEKLEVVVNERREEESAAAAEVEERTRKLQQYREMLIADGIDPNELLNSMAAAKSGTKAKRAARPAKYSYVDENGETKTWTGQGRTPAVIKKAMEEQDKQLEDFLIKE</sequence>
<name>HNS_SALPA</name>
<comment type="function">
    <text evidence="3">A DNA-binding protein implicated in transcriptional repression and chromosome organization and compaction. Binds nucleation sites in AT-rich DNA and bridges them, forming higher-order nucleoprotein complexes and condensing the chromosome. As many horizontally transferred genes are AT-rich, it plays a central role in silencing foreign genes. A subset of genes are repressed by H-NS in association with other proteins (By similarity).</text>
</comment>
<comment type="subunit">
    <text evidence="3">Homodimer that oligomerizes on DNA into higher-order complexes that form bridges between disparate regions of DNA compacting it. Interacts with Hha, YdgT and StpA.</text>
</comment>
<comment type="subcellular location">
    <subcellularLocation>
        <location evidence="3">Cytoplasm</location>
        <location evidence="3">Nucleoid</location>
    </subcellularLocation>
</comment>
<comment type="similarity">
    <text evidence="4">Belongs to the histone-like protein H-NS family.</text>
</comment>
<feature type="initiator methionine" description="Removed" evidence="1">
    <location>
        <position position="1"/>
    </location>
</feature>
<feature type="chain" id="PRO_0000168508" description="DNA-binding protein H-NS">
    <location>
        <begin position="2"/>
        <end position="137"/>
    </location>
</feature>
<feature type="DNA-binding region" evidence="2">
    <location>
        <begin position="112"/>
        <end position="117"/>
    </location>
</feature>
<feature type="site" description="Interacts with Hha" evidence="1">
    <location>
        <position position="12"/>
    </location>
</feature>